<comment type="subcellular location">
    <subcellularLocation>
        <location evidence="1">Secreted</location>
    </subcellularLocation>
</comment>
<comment type="similarity">
    <text evidence="3">Belongs to the DEFL family.</text>
</comment>
<protein>
    <recommendedName>
        <fullName>Putative defensin-like protein 119</fullName>
    </recommendedName>
    <alternativeName>
        <fullName>Putative low-molecular-weight cysteine-rich protein 53</fullName>
        <shortName>Protein LCR53</shortName>
    </alternativeName>
</protein>
<sequence length="75" mass="8473">MAKSTIFAIFMIVFVLGMVTKETKGQEMCRDLLMRAKNCDDSTCATLCKQKWKGNGSCFPNVYRKSCLCTFPCKT</sequence>
<keyword id="KW-0929">Antimicrobial</keyword>
<keyword id="KW-1015">Disulfide bond</keyword>
<keyword id="KW-0295">Fungicide</keyword>
<keyword id="KW-0611">Plant defense</keyword>
<keyword id="KW-1185">Reference proteome</keyword>
<keyword id="KW-0964">Secreted</keyword>
<keyword id="KW-0732">Signal</keyword>
<name>DF119_ARATH</name>
<evidence type="ECO:0000250" key="1"/>
<evidence type="ECO:0000255" key="2"/>
<evidence type="ECO:0000305" key="3"/>
<organism evidence="3">
    <name type="scientific">Arabidopsis thaliana</name>
    <name type="common">Mouse-ear cress</name>
    <dbReference type="NCBI Taxonomy" id="3702"/>
    <lineage>
        <taxon>Eukaryota</taxon>
        <taxon>Viridiplantae</taxon>
        <taxon>Streptophyta</taxon>
        <taxon>Embryophyta</taxon>
        <taxon>Tracheophyta</taxon>
        <taxon>Spermatophyta</taxon>
        <taxon>Magnoliopsida</taxon>
        <taxon>eudicotyledons</taxon>
        <taxon>Gunneridae</taxon>
        <taxon>Pentapetalae</taxon>
        <taxon>rosids</taxon>
        <taxon>malvids</taxon>
        <taxon>Brassicales</taxon>
        <taxon>Brassicaceae</taxon>
        <taxon>Camelineae</taxon>
        <taxon>Arabidopsis</taxon>
    </lineage>
</organism>
<proteinExistence type="inferred from homology"/>
<dbReference type="EMBL" id="AL137898">
    <property type="status" value="NOT_ANNOTATED_CDS"/>
    <property type="molecule type" value="Genomic_DNA"/>
</dbReference>
<dbReference type="EMBL" id="CP002686">
    <property type="protein sequence ID" value="AEE80167.1"/>
    <property type="molecule type" value="Genomic_DNA"/>
</dbReference>
<dbReference type="RefSeq" id="NP_001030911.1">
    <property type="nucleotide sequence ID" value="NM_001035834.2"/>
</dbReference>
<dbReference type="SMR" id="P82767"/>
<dbReference type="PaxDb" id="3702-AT3G61177.1"/>
<dbReference type="ProteomicsDB" id="224012"/>
<dbReference type="EnsemblPlants" id="AT3G61177.1">
    <property type="protein sequence ID" value="AT3G61177.1"/>
    <property type="gene ID" value="AT3G61177"/>
</dbReference>
<dbReference type="GeneID" id="3769757"/>
<dbReference type="Gramene" id="AT3G61177.1">
    <property type="protein sequence ID" value="AT3G61177.1"/>
    <property type="gene ID" value="AT3G61177"/>
</dbReference>
<dbReference type="KEGG" id="ath:AT3G61177"/>
<dbReference type="Araport" id="AT3G61177"/>
<dbReference type="TAIR" id="AT3G61177">
    <property type="gene designation" value="LCR53"/>
</dbReference>
<dbReference type="HOGENOM" id="CLU_182511_2_0_1"/>
<dbReference type="InParanoid" id="P82767"/>
<dbReference type="OMA" id="CATLCKQ"/>
<dbReference type="PhylomeDB" id="P82767"/>
<dbReference type="PRO" id="PR:P82767"/>
<dbReference type="Proteomes" id="UP000006548">
    <property type="component" value="Chromosome 3"/>
</dbReference>
<dbReference type="ExpressionAtlas" id="P82767">
    <property type="expression patterns" value="baseline"/>
</dbReference>
<dbReference type="GO" id="GO:0005576">
    <property type="term" value="C:extracellular region"/>
    <property type="evidence" value="ECO:0007669"/>
    <property type="project" value="UniProtKB-SubCell"/>
</dbReference>
<dbReference type="GO" id="GO:0050832">
    <property type="term" value="P:defense response to fungus"/>
    <property type="evidence" value="ECO:0007669"/>
    <property type="project" value="UniProtKB-KW"/>
</dbReference>
<dbReference type="GO" id="GO:0031640">
    <property type="term" value="P:killing of cells of another organism"/>
    <property type="evidence" value="ECO:0007669"/>
    <property type="project" value="UniProtKB-KW"/>
</dbReference>
<dbReference type="InterPro" id="IPR010851">
    <property type="entry name" value="DEFL"/>
</dbReference>
<dbReference type="PANTHER" id="PTHR33830:SF10">
    <property type="entry name" value="DEFENSIN-LIKE PROTEIN 122-RELATED"/>
    <property type="match status" value="1"/>
</dbReference>
<dbReference type="PANTHER" id="PTHR33830">
    <property type="entry name" value="DEFENSIN-LIKE PROTEIN 184-RELATED"/>
    <property type="match status" value="1"/>
</dbReference>
<dbReference type="Pfam" id="PF07333">
    <property type="entry name" value="SLR1-BP"/>
    <property type="match status" value="1"/>
</dbReference>
<gene>
    <name type="primary">LCR53</name>
    <name type="ordered locus">At3g61177</name>
    <name type="ORF">T20K12</name>
</gene>
<reference evidence="3" key="1">
    <citation type="journal article" date="2000" name="Nature">
        <title>Sequence and analysis of chromosome 3 of the plant Arabidopsis thaliana.</title>
        <authorList>
            <person name="Salanoubat M."/>
            <person name="Lemcke K."/>
            <person name="Rieger M."/>
            <person name="Ansorge W."/>
            <person name="Unseld M."/>
            <person name="Fartmann B."/>
            <person name="Valle G."/>
            <person name="Bloecker H."/>
            <person name="Perez-Alonso M."/>
            <person name="Obermaier B."/>
            <person name="Delseny M."/>
            <person name="Boutry M."/>
            <person name="Grivell L.A."/>
            <person name="Mache R."/>
            <person name="Puigdomenech P."/>
            <person name="De Simone V."/>
            <person name="Choisne N."/>
            <person name="Artiguenave F."/>
            <person name="Robert C."/>
            <person name="Brottier P."/>
            <person name="Wincker P."/>
            <person name="Cattolico L."/>
            <person name="Weissenbach J."/>
            <person name="Saurin W."/>
            <person name="Quetier F."/>
            <person name="Schaefer M."/>
            <person name="Mueller-Auer S."/>
            <person name="Gabel C."/>
            <person name="Fuchs M."/>
            <person name="Benes V."/>
            <person name="Wurmbach E."/>
            <person name="Drzonek H."/>
            <person name="Erfle H."/>
            <person name="Jordan N."/>
            <person name="Bangert S."/>
            <person name="Wiedelmann R."/>
            <person name="Kranz H."/>
            <person name="Voss H."/>
            <person name="Holland R."/>
            <person name="Brandt P."/>
            <person name="Nyakatura G."/>
            <person name="Vezzi A."/>
            <person name="D'Angelo M."/>
            <person name="Pallavicini A."/>
            <person name="Toppo S."/>
            <person name="Simionati B."/>
            <person name="Conrad A."/>
            <person name="Hornischer K."/>
            <person name="Kauer G."/>
            <person name="Loehnert T.-H."/>
            <person name="Nordsiek G."/>
            <person name="Reichelt J."/>
            <person name="Scharfe M."/>
            <person name="Schoen O."/>
            <person name="Bargues M."/>
            <person name="Terol J."/>
            <person name="Climent J."/>
            <person name="Navarro P."/>
            <person name="Collado C."/>
            <person name="Perez-Perez A."/>
            <person name="Ottenwaelder B."/>
            <person name="Duchemin D."/>
            <person name="Cooke R."/>
            <person name="Laudie M."/>
            <person name="Berger-Llauro C."/>
            <person name="Purnelle B."/>
            <person name="Masuy D."/>
            <person name="de Haan M."/>
            <person name="Maarse A.C."/>
            <person name="Alcaraz J.-P."/>
            <person name="Cottet A."/>
            <person name="Casacuberta E."/>
            <person name="Monfort A."/>
            <person name="Argiriou A."/>
            <person name="Flores M."/>
            <person name="Liguori R."/>
            <person name="Vitale D."/>
            <person name="Mannhaupt G."/>
            <person name="Haase D."/>
            <person name="Schoof H."/>
            <person name="Rudd S."/>
            <person name="Zaccaria P."/>
            <person name="Mewes H.-W."/>
            <person name="Mayer K.F.X."/>
            <person name="Kaul S."/>
            <person name="Town C.D."/>
            <person name="Koo H.L."/>
            <person name="Tallon L.J."/>
            <person name="Jenkins J."/>
            <person name="Rooney T."/>
            <person name="Rizzo M."/>
            <person name="Walts A."/>
            <person name="Utterback T."/>
            <person name="Fujii C.Y."/>
            <person name="Shea T.P."/>
            <person name="Creasy T.H."/>
            <person name="Haas B."/>
            <person name="Maiti R."/>
            <person name="Wu D."/>
            <person name="Peterson J."/>
            <person name="Van Aken S."/>
            <person name="Pai G."/>
            <person name="Militscher J."/>
            <person name="Sellers P."/>
            <person name="Gill J.E."/>
            <person name="Feldblyum T.V."/>
            <person name="Preuss D."/>
            <person name="Lin X."/>
            <person name="Nierman W.C."/>
            <person name="Salzberg S.L."/>
            <person name="White O."/>
            <person name="Venter J.C."/>
            <person name="Fraser C.M."/>
            <person name="Kaneko T."/>
            <person name="Nakamura Y."/>
            <person name="Sato S."/>
            <person name="Kato T."/>
            <person name="Asamizu E."/>
            <person name="Sasamoto S."/>
            <person name="Kimura T."/>
            <person name="Idesawa K."/>
            <person name="Kawashima K."/>
            <person name="Kishida Y."/>
            <person name="Kiyokawa C."/>
            <person name="Kohara M."/>
            <person name="Matsumoto M."/>
            <person name="Matsuno A."/>
            <person name="Muraki A."/>
            <person name="Nakayama S."/>
            <person name="Nakazaki N."/>
            <person name="Shinpo S."/>
            <person name="Takeuchi C."/>
            <person name="Wada T."/>
            <person name="Watanabe A."/>
            <person name="Yamada M."/>
            <person name="Yasuda M."/>
            <person name="Tabata S."/>
        </authorList>
    </citation>
    <scope>NUCLEOTIDE SEQUENCE [LARGE SCALE GENOMIC DNA]</scope>
    <source>
        <strain>cv. Columbia</strain>
    </source>
</reference>
<reference key="2">
    <citation type="journal article" date="2017" name="Plant J.">
        <title>Araport11: a complete reannotation of the Arabidopsis thaliana reference genome.</title>
        <authorList>
            <person name="Cheng C.Y."/>
            <person name="Krishnakumar V."/>
            <person name="Chan A.P."/>
            <person name="Thibaud-Nissen F."/>
            <person name="Schobel S."/>
            <person name="Town C.D."/>
        </authorList>
    </citation>
    <scope>GENOME REANNOTATION</scope>
    <source>
        <strain>cv. Columbia</strain>
    </source>
</reference>
<reference evidence="3" key="3">
    <citation type="journal article" date="2001" name="Plant Mol. Biol.">
        <title>Two large Arabidopsis thaliana gene families are homologous to the Brassica gene superfamily that encodes pollen coat proteins and the male component of the self-incompatibility response.</title>
        <authorList>
            <person name="Vanoosthuyse V."/>
            <person name="Miege C."/>
            <person name="Dumas C."/>
            <person name="Cock J.M."/>
        </authorList>
    </citation>
    <scope>IDENTIFICATION</scope>
</reference>
<reference key="4">
    <citation type="journal article" date="2005" name="Plant Physiol.">
        <title>Genome organization of more than 300 defensin-like genes in Arabidopsis.</title>
        <authorList>
            <person name="Silverstein K.A.T."/>
            <person name="Graham M.A."/>
            <person name="Paape T.D."/>
            <person name="VandenBosch K.A."/>
        </authorList>
    </citation>
    <scope>GENE FAMILY</scope>
</reference>
<accession>P82767</accession>
<feature type="signal peptide" evidence="2">
    <location>
        <begin position="1"/>
        <end position="25"/>
    </location>
</feature>
<feature type="chain" id="PRO_0000017291" description="Putative defensin-like protein 119">
    <location>
        <begin position="26"/>
        <end position="75"/>
    </location>
</feature>
<feature type="disulfide bond" evidence="1">
    <location>
        <begin position="29"/>
        <end position="73"/>
    </location>
</feature>
<feature type="disulfide bond" evidence="1">
    <location>
        <begin position="39"/>
        <end position="58"/>
    </location>
</feature>
<feature type="disulfide bond" evidence="1">
    <location>
        <begin position="44"/>
        <end position="67"/>
    </location>
</feature>
<feature type="disulfide bond" evidence="1">
    <location>
        <begin position="48"/>
        <end position="69"/>
    </location>
</feature>